<proteinExistence type="evidence at protein level"/>
<organism>
    <name type="scientific">Homo sapiens</name>
    <name type="common">Human</name>
    <dbReference type="NCBI Taxonomy" id="9606"/>
    <lineage>
        <taxon>Eukaryota</taxon>
        <taxon>Metazoa</taxon>
        <taxon>Chordata</taxon>
        <taxon>Craniata</taxon>
        <taxon>Vertebrata</taxon>
        <taxon>Euteleostomi</taxon>
        <taxon>Mammalia</taxon>
        <taxon>Eutheria</taxon>
        <taxon>Euarchontoglires</taxon>
        <taxon>Primates</taxon>
        <taxon>Haplorrhini</taxon>
        <taxon>Catarrhini</taxon>
        <taxon>Hominidae</taxon>
        <taxon>Homo</taxon>
    </lineage>
</organism>
<dbReference type="EMBL" id="AF090116">
    <property type="protein sequence ID" value="AAD34290.1"/>
    <property type="molecule type" value="mRNA"/>
</dbReference>
<dbReference type="EMBL" id="AF090117">
    <property type="protein sequence ID" value="AAD34291.1"/>
    <property type="molecule type" value="mRNA"/>
</dbReference>
<dbReference type="EMBL" id="U32439">
    <property type="protein sequence ID" value="AAC50351.1"/>
    <property type="molecule type" value="mRNA"/>
</dbReference>
<dbReference type="EMBL" id="AF493930">
    <property type="protein sequence ID" value="AAM12644.1"/>
    <property type="molecule type" value="mRNA"/>
</dbReference>
<dbReference type="EMBL" id="AF493931">
    <property type="protein sequence ID" value="AAM12645.1"/>
    <property type="molecule type" value="mRNA"/>
</dbReference>
<dbReference type="EMBL" id="AY587875">
    <property type="protein sequence ID" value="AAT52231.1"/>
    <property type="molecule type" value="mRNA"/>
</dbReference>
<dbReference type="EMBL" id="AL359764">
    <property type="status" value="NOT_ANNOTATED_CDS"/>
    <property type="molecule type" value="Genomic_DNA"/>
</dbReference>
<dbReference type="EMBL" id="AL365184">
    <property type="status" value="NOT_ANNOTATED_CDS"/>
    <property type="molecule type" value="Genomic_DNA"/>
</dbReference>
<dbReference type="EMBL" id="AL512307">
    <property type="status" value="NOT_ANNOTATED_CDS"/>
    <property type="molecule type" value="Genomic_DNA"/>
</dbReference>
<dbReference type="EMBL" id="AL590682">
    <property type="status" value="NOT_ANNOTATED_CDS"/>
    <property type="molecule type" value="Genomic_DNA"/>
</dbReference>
<dbReference type="EMBL" id="CH471098">
    <property type="protein sequence ID" value="EAW70086.1"/>
    <property type="molecule type" value="Genomic_DNA"/>
</dbReference>
<dbReference type="EMBL" id="BC022009">
    <property type="protein sequence ID" value="AAH22009.1"/>
    <property type="molecule type" value="mRNA"/>
</dbReference>
<dbReference type="CCDS" id="CCDS31071.1">
    <molecule id="P49802-5"/>
</dbReference>
<dbReference type="CCDS" id="CCDS60457.1">
    <molecule id="P49802-4"/>
</dbReference>
<dbReference type="CCDS" id="CCDS60458.1">
    <molecule id="P49802-2"/>
</dbReference>
<dbReference type="CCDS" id="CCDS60459.1">
    <molecule id="P49802-3"/>
</dbReference>
<dbReference type="CCDS" id="CCDS91181.1">
    <molecule id="P49802-1"/>
</dbReference>
<dbReference type="RefSeq" id="NP_001269702.1">
    <molecule id="P49802-4"/>
    <property type="nucleotide sequence ID" value="NM_001282773.2"/>
</dbReference>
<dbReference type="RefSeq" id="NP_001269704.1">
    <molecule id="P49802-3"/>
    <property type="nucleotide sequence ID" value="NM_001282775.2"/>
</dbReference>
<dbReference type="RefSeq" id="NP_001269707.1">
    <molecule id="P49802-2"/>
    <property type="nucleotide sequence ID" value="NM_001282778.2"/>
</dbReference>
<dbReference type="RefSeq" id="NP_001351815.1">
    <molecule id="P49802-1"/>
    <property type="nucleotide sequence ID" value="NM_001364886.1"/>
</dbReference>
<dbReference type="RefSeq" id="NP_002915.3">
    <molecule id="P49802-5"/>
    <property type="nucleotide sequence ID" value="NM_002924.5"/>
</dbReference>
<dbReference type="RefSeq" id="XP_005273275.1">
    <property type="nucleotide sequence ID" value="XM_005273218.3"/>
</dbReference>
<dbReference type="PDB" id="2A72">
    <property type="method" value="X-ray"/>
    <property type="resolution" value="2.00 A"/>
    <property type="chains" value="A/B=320-463"/>
</dbReference>
<dbReference type="PDB" id="2D9J">
    <property type="method" value="NMR"/>
    <property type="chains" value="A=323-448"/>
</dbReference>
<dbReference type="PDB" id="7EWP">
    <property type="method" value="EM"/>
    <property type="resolution" value="4.30 A"/>
    <property type="chains" value="C=1-495"/>
</dbReference>
<dbReference type="PDB" id="7EWR">
    <property type="method" value="EM"/>
    <property type="resolution" value="4.70 A"/>
    <property type="chains" value="C/E=1-495"/>
</dbReference>
<dbReference type="PDB" id="7SHF">
    <property type="method" value="EM"/>
    <property type="resolution" value="3.40 A"/>
    <property type="chains" value="C=1-463"/>
</dbReference>
<dbReference type="PDBsum" id="2A72"/>
<dbReference type="PDBsum" id="2D9J"/>
<dbReference type="PDBsum" id="7EWP"/>
<dbReference type="PDBsum" id="7EWR"/>
<dbReference type="PDBsum" id="7SHF"/>
<dbReference type="EMDB" id="EMD-25126"/>
<dbReference type="EMDB" id="EMD-31360"/>
<dbReference type="EMDB" id="EMD-31363"/>
<dbReference type="SMR" id="P49802"/>
<dbReference type="BioGRID" id="111932">
    <property type="interactions" value="16"/>
</dbReference>
<dbReference type="CORUM" id="P49802"/>
<dbReference type="DIP" id="DIP-40869N"/>
<dbReference type="FunCoup" id="P49802">
    <property type="interactions" value="873"/>
</dbReference>
<dbReference type="IntAct" id="P49802">
    <property type="interactions" value="10"/>
</dbReference>
<dbReference type="MINT" id="P49802"/>
<dbReference type="STRING" id="9606.ENSP00000355523"/>
<dbReference type="BindingDB" id="P49802"/>
<dbReference type="GlyGen" id="P49802">
    <property type="glycosylation" value="1 site, 1 O-linked glycan (1 site)"/>
</dbReference>
<dbReference type="iPTMnet" id="P49802"/>
<dbReference type="PhosphoSitePlus" id="P49802"/>
<dbReference type="SwissPalm" id="P49802"/>
<dbReference type="BioMuta" id="RGS7"/>
<dbReference type="DMDM" id="17380284"/>
<dbReference type="jPOST" id="P49802"/>
<dbReference type="MassIVE" id="P49802"/>
<dbReference type="PaxDb" id="9606-ENSP00000355523"/>
<dbReference type="PeptideAtlas" id="P49802"/>
<dbReference type="ProteomicsDB" id="56134">
    <molecule id="P49802-1"/>
</dbReference>
<dbReference type="ProteomicsDB" id="56135">
    <molecule id="P49802-2"/>
</dbReference>
<dbReference type="ProteomicsDB" id="56136">
    <molecule id="P49802-3"/>
</dbReference>
<dbReference type="ProteomicsDB" id="56137">
    <molecule id="P49802-4"/>
</dbReference>
<dbReference type="ProteomicsDB" id="56138">
    <molecule id="P49802-5"/>
</dbReference>
<dbReference type="Antibodypedia" id="620">
    <property type="antibodies" value="232 antibodies from 31 providers"/>
</dbReference>
<dbReference type="DNASU" id="6000"/>
<dbReference type="Ensembl" id="ENST00000348120.6">
    <molecule id="P49802-4"/>
    <property type="protein sequence ID" value="ENSP00000341242.2"/>
    <property type="gene ID" value="ENSG00000182901.18"/>
</dbReference>
<dbReference type="Ensembl" id="ENST00000366563.5">
    <molecule id="P49802-3"/>
    <property type="protein sequence ID" value="ENSP00000355521.1"/>
    <property type="gene ID" value="ENSG00000182901.18"/>
</dbReference>
<dbReference type="Ensembl" id="ENST00000366564.5">
    <molecule id="P49802-2"/>
    <property type="protein sequence ID" value="ENSP00000355522.1"/>
    <property type="gene ID" value="ENSG00000182901.18"/>
</dbReference>
<dbReference type="Ensembl" id="ENST00000366565.5">
    <molecule id="P49802-5"/>
    <property type="protein sequence ID" value="ENSP00000355523.1"/>
    <property type="gene ID" value="ENSG00000182901.18"/>
</dbReference>
<dbReference type="Ensembl" id="ENST00000440928.6">
    <molecule id="P49802-1"/>
    <property type="protein sequence ID" value="ENSP00000404399.2"/>
    <property type="gene ID" value="ENSG00000182901.18"/>
</dbReference>
<dbReference type="Ensembl" id="ENST00000691979.1">
    <molecule id="P49802-3"/>
    <property type="protein sequence ID" value="ENSP00000510676.1"/>
    <property type="gene ID" value="ENSG00000182901.18"/>
</dbReference>
<dbReference type="Ensembl" id="ENST00000693043.1">
    <molecule id="P49802-4"/>
    <property type="protein sequence ID" value="ENSP00000508520.1"/>
    <property type="gene ID" value="ENSG00000182901.18"/>
</dbReference>
<dbReference type="GeneID" id="6000"/>
<dbReference type="KEGG" id="hsa:6000"/>
<dbReference type="MANE-Select" id="ENST00000440928.6">
    <property type="protein sequence ID" value="ENSP00000404399.2"/>
    <property type="RefSeq nucleotide sequence ID" value="NM_001364886.1"/>
    <property type="RefSeq protein sequence ID" value="NP_001351815.1"/>
</dbReference>
<dbReference type="UCSC" id="uc001hyu.4">
    <molecule id="P49802-1"/>
    <property type="organism name" value="human"/>
</dbReference>
<dbReference type="AGR" id="HGNC:10003"/>
<dbReference type="CTD" id="6000"/>
<dbReference type="DisGeNET" id="6000"/>
<dbReference type="GeneCards" id="RGS7"/>
<dbReference type="HGNC" id="HGNC:10003">
    <property type="gene designation" value="RGS7"/>
</dbReference>
<dbReference type="HPA" id="ENSG00000182901">
    <property type="expression patterns" value="Tissue enriched (brain)"/>
</dbReference>
<dbReference type="MalaCards" id="RGS7"/>
<dbReference type="MIM" id="602517">
    <property type="type" value="gene"/>
</dbReference>
<dbReference type="neXtProt" id="NX_P49802"/>
<dbReference type="OpenTargets" id="ENSG00000182901"/>
<dbReference type="PharmGKB" id="PA34378"/>
<dbReference type="VEuPathDB" id="HostDB:ENSG00000182901"/>
<dbReference type="eggNOG" id="KOG3589">
    <property type="taxonomic scope" value="Eukaryota"/>
</dbReference>
<dbReference type="GeneTree" id="ENSGT00940000156661"/>
<dbReference type="InParanoid" id="P49802"/>
<dbReference type="OMA" id="YVEYDPC"/>
<dbReference type="OrthoDB" id="196547at2759"/>
<dbReference type="PAN-GO" id="P49802">
    <property type="GO annotations" value="6 GO annotations based on evolutionary models"/>
</dbReference>
<dbReference type="PhylomeDB" id="P49802"/>
<dbReference type="TreeFam" id="TF351956"/>
<dbReference type="PathwayCommons" id="P49802"/>
<dbReference type="Reactome" id="R-HSA-418594">
    <property type="pathway name" value="G alpha (i) signalling events"/>
</dbReference>
<dbReference type="Reactome" id="R-HSA-6814122">
    <property type="pathway name" value="Cooperation of PDCL (PhLP1) and TRiC/CCT in G-protein beta folding"/>
</dbReference>
<dbReference type="SignaLink" id="P49802"/>
<dbReference type="SIGNOR" id="P49802"/>
<dbReference type="BioGRID-ORCS" id="6000">
    <property type="hits" value="23 hits in 1160 CRISPR screens"/>
</dbReference>
<dbReference type="CD-CODE" id="FB4E32DD">
    <property type="entry name" value="Presynaptic clusters and postsynaptic densities"/>
</dbReference>
<dbReference type="ChiTaRS" id="RGS7">
    <property type="organism name" value="human"/>
</dbReference>
<dbReference type="EvolutionaryTrace" id="P49802"/>
<dbReference type="GeneWiki" id="RGS7"/>
<dbReference type="GenomeRNAi" id="6000"/>
<dbReference type="Pharos" id="P49802">
    <property type="development level" value="Tbio"/>
</dbReference>
<dbReference type="PRO" id="PR:P49802"/>
<dbReference type="Proteomes" id="UP000005640">
    <property type="component" value="Chromosome 1"/>
</dbReference>
<dbReference type="RNAct" id="P49802">
    <property type="molecule type" value="protein"/>
</dbReference>
<dbReference type="Bgee" id="ENSG00000182901">
    <property type="expression patterns" value="Expressed in endothelial cell and 114 other cell types or tissues"/>
</dbReference>
<dbReference type="ExpressionAtlas" id="P49802">
    <property type="expression patterns" value="baseline and differential"/>
</dbReference>
<dbReference type="GO" id="GO:0051286">
    <property type="term" value="C:cell tip"/>
    <property type="evidence" value="ECO:0007669"/>
    <property type="project" value="Ensembl"/>
</dbReference>
<dbReference type="GO" id="GO:0005737">
    <property type="term" value="C:cytoplasm"/>
    <property type="evidence" value="ECO:0000318"/>
    <property type="project" value="GO_Central"/>
</dbReference>
<dbReference type="GO" id="GO:0005829">
    <property type="term" value="C:cytosol"/>
    <property type="evidence" value="ECO:0000314"/>
    <property type="project" value="UniProtKB"/>
</dbReference>
<dbReference type="GO" id="GO:0044292">
    <property type="term" value="C:dendrite terminus"/>
    <property type="evidence" value="ECO:0007669"/>
    <property type="project" value="Ensembl"/>
</dbReference>
<dbReference type="GO" id="GO:0098978">
    <property type="term" value="C:glutamatergic synapse"/>
    <property type="evidence" value="ECO:0007669"/>
    <property type="project" value="Ensembl"/>
</dbReference>
<dbReference type="GO" id="GO:0043005">
    <property type="term" value="C:neuron projection"/>
    <property type="evidence" value="ECO:0000318"/>
    <property type="project" value="GO_Central"/>
</dbReference>
<dbReference type="GO" id="GO:0005634">
    <property type="term" value="C:nucleus"/>
    <property type="evidence" value="ECO:0007669"/>
    <property type="project" value="Ensembl"/>
</dbReference>
<dbReference type="GO" id="GO:0005886">
    <property type="term" value="C:plasma membrane"/>
    <property type="evidence" value="ECO:0000314"/>
    <property type="project" value="UniProt"/>
</dbReference>
<dbReference type="GO" id="GO:0045211">
    <property type="term" value="C:postsynaptic membrane"/>
    <property type="evidence" value="ECO:0007669"/>
    <property type="project" value="Ensembl"/>
</dbReference>
<dbReference type="GO" id="GO:0042734">
    <property type="term" value="C:presynaptic membrane"/>
    <property type="evidence" value="ECO:0007669"/>
    <property type="project" value="Ensembl"/>
</dbReference>
<dbReference type="GO" id="GO:0001965">
    <property type="term" value="F:G-protein alpha-subunit binding"/>
    <property type="evidence" value="ECO:0000314"/>
    <property type="project" value="UniProtKB"/>
</dbReference>
<dbReference type="GO" id="GO:0031681">
    <property type="term" value="F:G-protein beta-subunit binding"/>
    <property type="evidence" value="ECO:0000353"/>
    <property type="project" value="UniProtKB"/>
</dbReference>
<dbReference type="GO" id="GO:0005096">
    <property type="term" value="F:GTPase activator activity"/>
    <property type="evidence" value="ECO:0000314"/>
    <property type="project" value="UniProtKB"/>
</dbReference>
<dbReference type="GO" id="GO:0003924">
    <property type="term" value="F:GTPase activity"/>
    <property type="evidence" value="ECO:0000304"/>
    <property type="project" value="Reactome"/>
</dbReference>
<dbReference type="GO" id="GO:0007186">
    <property type="term" value="P:G protein-coupled receptor signaling pathway"/>
    <property type="evidence" value="ECO:0000314"/>
    <property type="project" value="UniProtKB"/>
</dbReference>
<dbReference type="GO" id="GO:0035556">
    <property type="term" value="P:intracellular signal transduction"/>
    <property type="evidence" value="ECO:0007669"/>
    <property type="project" value="InterPro"/>
</dbReference>
<dbReference type="GO" id="GO:0045744">
    <property type="term" value="P:negative regulation of G protein-coupled receptor signaling pathway"/>
    <property type="evidence" value="ECO:0000314"/>
    <property type="project" value="UniProtKB"/>
</dbReference>
<dbReference type="GO" id="GO:0043547">
    <property type="term" value="P:positive regulation of GTPase activity"/>
    <property type="evidence" value="ECO:0000314"/>
    <property type="project" value="UniProtKB"/>
</dbReference>
<dbReference type="GO" id="GO:0060078">
    <property type="term" value="P:regulation of postsynaptic membrane potential"/>
    <property type="evidence" value="ECO:0007669"/>
    <property type="project" value="Ensembl"/>
</dbReference>
<dbReference type="CDD" id="cd04450">
    <property type="entry name" value="DEP_RGS7-like"/>
    <property type="match status" value="1"/>
</dbReference>
<dbReference type="CDD" id="cd00068">
    <property type="entry name" value="GGL"/>
    <property type="match status" value="1"/>
</dbReference>
<dbReference type="CDD" id="cd08738">
    <property type="entry name" value="RGS_RGS7"/>
    <property type="match status" value="1"/>
</dbReference>
<dbReference type="FunFam" id="1.10.10.10:FF:000162">
    <property type="entry name" value="Regulator of G-protein signaling 6"/>
    <property type="match status" value="1"/>
</dbReference>
<dbReference type="FunFam" id="1.10.1240.60:FF:000001">
    <property type="entry name" value="Regulator of G-protein signaling 6"/>
    <property type="match status" value="1"/>
</dbReference>
<dbReference type="FunFam" id="4.10.260.10:FF:000002">
    <property type="entry name" value="Regulator of G-protein signaling 6"/>
    <property type="match status" value="1"/>
</dbReference>
<dbReference type="FunFam" id="1.10.167.10:FF:000002">
    <property type="entry name" value="Regulator of G-protein signaling 6 isoform 9"/>
    <property type="match status" value="1"/>
</dbReference>
<dbReference type="Gene3D" id="1.10.1240.60">
    <property type="match status" value="1"/>
</dbReference>
<dbReference type="Gene3D" id="1.10.167.10">
    <property type="entry name" value="Regulator of G-protein Signalling 4, domain 2"/>
    <property type="match status" value="1"/>
</dbReference>
<dbReference type="Gene3D" id="4.10.260.10">
    <property type="entry name" value="Transducin (heterotrimeric G protein), gamma chain"/>
    <property type="match status" value="1"/>
</dbReference>
<dbReference type="Gene3D" id="1.10.10.10">
    <property type="entry name" value="Winged helix-like DNA-binding domain superfamily/Winged helix DNA-binding domain"/>
    <property type="match status" value="1"/>
</dbReference>
<dbReference type="InterPro" id="IPR000591">
    <property type="entry name" value="DEP_dom"/>
</dbReference>
<dbReference type="InterPro" id="IPR015898">
    <property type="entry name" value="G-protein_gamma-like_dom"/>
</dbReference>
<dbReference type="InterPro" id="IPR036284">
    <property type="entry name" value="GGL_sf"/>
</dbReference>
<dbReference type="InterPro" id="IPR016137">
    <property type="entry name" value="RGS"/>
</dbReference>
<dbReference type="InterPro" id="IPR047016">
    <property type="entry name" value="RGS6/7/9/11"/>
</dbReference>
<dbReference type="InterPro" id="IPR047017">
    <property type="entry name" value="RGS6/7/9/11_DHEX_sf"/>
</dbReference>
<dbReference type="InterPro" id="IPR040759">
    <property type="entry name" value="RGS_DHEX"/>
</dbReference>
<dbReference type="InterPro" id="IPR036305">
    <property type="entry name" value="RGS_sf"/>
</dbReference>
<dbReference type="InterPro" id="IPR044926">
    <property type="entry name" value="RGS_subdomain_2"/>
</dbReference>
<dbReference type="InterPro" id="IPR036388">
    <property type="entry name" value="WH-like_DNA-bd_sf"/>
</dbReference>
<dbReference type="InterPro" id="IPR036390">
    <property type="entry name" value="WH_DNA-bd_sf"/>
</dbReference>
<dbReference type="PANTHER" id="PTHR45746">
    <property type="entry name" value="LP21163P"/>
    <property type="match status" value="1"/>
</dbReference>
<dbReference type="PANTHER" id="PTHR45746:SF7">
    <property type="entry name" value="REGULATOR OF G-PROTEIN SIGNALING 7"/>
    <property type="match status" value="1"/>
</dbReference>
<dbReference type="Pfam" id="PF00610">
    <property type="entry name" value="DEP"/>
    <property type="match status" value="1"/>
</dbReference>
<dbReference type="Pfam" id="PF00631">
    <property type="entry name" value="G-gamma"/>
    <property type="match status" value="1"/>
</dbReference>
<dbReference type="Pfam" id="PF00615">
    <property type="entry name" value="RGS"/>
    <property type="match status" value="1"/>
</dbReference>
<dbReference type="Pfam" id="PF18148">
    <property type="entry name" value="RGS_DHEX"/>
    <property type="match status" value="1"/>
</dbReference>
<dbReference type="PRINTS" id="PR01301">
    <property type="entry name" value="RGSPROTEIN"/>
</dbReference>
<dbReference type="SMART" id="SM00049">
    <property type="entry name" value="DEP"/>
    <property type="match status" value="1"/>
</dbReference>
<dbReference type="SMART" id="SM01224">
    <property type="entry name" value="G_gamma"/>
    <property type="match status" value="1"/>
</dbReference>
<dbReference type="SMART" id="SM00224">
    <property type="entry name" value="GGL"/>
    <property type="match status" value="1"/>
</dbReference>
<dbReference type="SMART" id="SM00315">
    <property type="entry name" value="RGS"/>
    <property type="match status" value="1"/>
</dbReference>
<dbReference type="SUPFAM" id="SSF48097">
    <property type="entry name" value="Regulator of G-protein signaling, RGS"/>
    <property type="match status" value="1"/>
</dbReference>
<dbReference type="SUPFAM" id="SSF48670">
    <property type="entry name" value="Transducin (heterotrimeric G protein), gamma chain"/>
    <property type="match status" value="1"/>
</dbReference>
<dbReference type="SUPFAM" id="SSF46785">
    <property type="entry name" value="Winged helix' DNA-binding domain"/>
    <property type="match status" value="1"/>
</dbReference>
<dbReference type="PROSITE" id="PS50186">
    <property type="entry name" value="DEP"/>
    <property type="match status" value="1"/>
</dbReference>
<dbReference type="PROSITE" id="PS50132">
    <property type="entry name" value="RGS"/>
    <property type="match status" value="1"/>
</dbReference>
<protein>
    <recommendedName>
        <fullName>Regulator of G-protein signaling 7</fullName>
        <shortName>RGS7</shortName>
    </recommendedName>
</protein>
<reference key="1">
    <citation type="journal article" date="1999" name="Proc. Natl. Acad. Sci. U.S.A.">
        <title>Interaction between RGS7 and polycystin.</title>
        <authorList>
            <person name="Kim E."/>
            <person name="Arnould T."/>
            <person name="Sellin L."/>
            <person name="Benzing T."/>
            <person name="Comella N."/>
            <person name="Kocher O."/>
            <person name="Tsiokas L."/>
            <person name="Sukhatme V.P."/>
            <person name="Walz G."/>
        </authorList>
    </citation>
    <scope>NUCLEOTIDE SEQUENCE [MRNA] (ISOFORMS 1 AND 2)</scope>
    <scope>INTERACTION WITH PKD1</scope>
    <scope>SUBCELLULAR LOCATION</scope>
    <scope>UBIQUITINATION</scope>
    <source>
        <tissue>Brain</tissue>
    </source>
</reference>
<reference key="2">
    <citation type="journal article" date="1996" name="Cell">
        <title>EGL-10 regulates G protein signaling in the C. elegans nervous system and shares a conserved domain with many mammalian proteins.</title>
        <authorList>
            <person name="Koelle M.R."/>
            <person name="Horvitz H.R."/>
        </authorList>
    </citation>
    <scope>PARTIAL NUCLEOTIDE SEQUENCE [MRNA] (ISOFORM 2)</scope>
    <source>
        <tissue>Brain</tissue>
    </source>
</reference>
<reference key="3">
    <citation type="submission" date="2002-03" db="EMBL/GenBank/DDBJ databases">
        <title>cDNA clones of human proteins involved in signal transduction sequenced by the Guthrie cDNA resource center (www.cdna.org).</title>
        <authorList>
            <person name="Puhl H.L. III"/>
            <person name="Ikeda S.R."/>
            <person name="Aronstam R.S."/>
        </authorList>
    </citation>
    <scope>NUCLEOTIDE SEQUENCE [LARGE SCALE MRNA] (ISOFORMS 2; 3 AND 4)</scope>
    <source>
        <tissue>Brain</tissue>
    </source>
</reference>
<reference key="4">
    <citation type="journal article" date="2006" name="Nature">
        <title>The DNA sequence and biological annotation of human chromosome 1.</title>
        <authorList>
            <person name="Gregory S.G."/>
            <person name="Barlow K.F."/>
            <person name="McLay K.E."/>
            <person name="Kaul R."/>
            <person name="Swarbreck D."/>
            <person name="Dunham A."/>
            <person name="Scott C.E."/>
            <person name="Howe K.L."/>
            <person name="Woodfine K."/>
            <person name="Spencer C.C.A."/>
            <person name="Jones M.C."/>
            <person name="Gillson C."/>
            <person name="Searle S."/>
            <person name="Zhou Y."/>
            <person name="Kokocinski F."/>
            <person name="McDonald L."/>
            <person name="Evans R."/>
            <person name="Phillips K."/>
            <person name="Atkinson A."/>
            <person name="Cooper R."/>
            <person name="Jones C."/>
            <person name="Hall R.E."/>
            <person name="Andrews T.D."/>
            <person name="Lloyd C."/>
            <person name="Ainscough R."/>
            <person name="Almeida J.P."/>
            <person name="Ambrose K.D."/>
            <person name="Anderson F."/>
            <person name="Andrew R.W."/>
            <person name="Ashwell R.I.S."/>
            <person name="Aubin K."/>
            <person name="Babbage A.K."/>
            <person name="Bagguley C.L."/>
            <person name="Bailey J."/>
            <person name="Beasley H."/>
            <person name="Bethel G."/>
            <person name="Bird C.P."/>
            <person name="Bray-Allen S."/>
            <person name="Brown J.Y."/>
            <person name="Brown A.J."/>
            <person name="Buckley D."/>
            <person name="Burton J."/>
            <person name="Bye J."/>
            <person name="Carder C."/>
            <person name="Chapman J.C."/>
            <person name="Clark S.Y."/>
            <person name="Clarke G."/>
            <person name="Clee C."/>
            <person name="Cobley V."/>
            <person name="Collier R.E."/>
            <person name="Corby N."/>
            <person name="Coville G.J."/>
            <person name="Davies J."/>
            <person name="Deadman R."/>
            <person name="Dunn M."/>
            <person name="Earthrowl M."/>
            <person name="Ellington A.G."/>
            <person name="Errington H."/>
            <person name="Frankish A."/>
            <person name="Frankland J."/>
            <person name="French L."/>
            <person name="Garner P."/>
            <person name="Garnett J."/>
            <person name="Gay L."/>
            <person name="Ghori M.R.J."/>
            <person name="Gibson R."/>
            <person name="Gilby L.M."/>
            <person name="Gillett W."/>
            <person name="Glithero R.J."/>
            <person name="Grafham D.V."/>
            <person name="Griffiths C."/>
            <person name="Griffiths-Jones S."/>
            <person name="Grocock R."/>
            <person name="Hammond S."/>
            <person name="Harrison E.S.I."/>
            <person name="Hart E."/>
            <person name="Haugen E."/>
            <person name="Heath P.D."/>
            <person name="Holmes S."/>
            <person name="Holt K."/>
            <person name="Howden P.J."/>
            <person name="Hunt A.R."/>
            <person name="Hunt S.E."/>
            <person name="Hunter G."/>
            <person name="Isherwood J."/>
            <person name="James R."/>
            <person name="Johnson C."/>
            <person name="Johnson D."/>
            <person name="Joy A."/>
            <person name="Kay M."/>
            <person name="Kershaw J.K."/>
            <person name="Kibukawa M."/>
            <person name="Kimberley A.M."/>
            <person name="King A."/>
            <person name="Knights A.J."/>
            <person name="Lad H."/>
            <person name="Laird G."/>
            <person name="Lawlor S."/>
            <person name="Leongamornlert D.A."/>
            <person name="Lloyd D.M."/>
            <person name="Loveland J."/>
            <person name="Lovell J."/>
            <person name="Lush M.J."/>
            <person name="Lyne R."/>
            <person name="Martin S."/>
            <person name="Mashreghi-Mohammadi M."/>
            <person name="Matthews L."/>
            <person name="Matthews N.S.W."/>
            <person name="McLaren S."/>
            <person name="Milne S."/>
            <person name="Mistry S."/>
            <person name="Moore M.J.F."/>
            <person name="Nickerson T."/>
            <person name="O'Dell C.N."/>
            <person name="Oliver K."/>
            <person name="Palmeiri A."/>
            <person name="Palmer S.A."/>
            <person name="Parker A."/>
            <person name="Patel D."/>
            <person name="Pearce A.V."/>
            <person name="Peck A.I."/>
            <person name="Pelan S."/>
            <person name="Phelps K."/>
            <person name="Phillimore B.J."/>
            <person name="Plumb R."/>
            <person name="Rajan J."/>
            <person name="Raymond C."/>
            <person name="Rouse G."/>
            <person name="Saenphimmachak C."/>
            <person name="Sehra H.K."/>
            <person name="Sheridan E."/>
            <person name="Shownkeen R."/>
            <person name="Sims S."/>
            <person name="Skuce C.D."/>
            <person name="Smith M."/>
            <person name="Steward C."/>
            <person name="Subramanian S."/>
            <person name="Sycamore N."/>
            <person name="Tracey A."/>
            <person name="Tromans A."/>
            <person name="Van Helmond Z."/>
            <person name="Wall M."/>
            <person name="Wallis J.M."/>
            <person name="White S."/>
            <person name="Whitehead S.L."/>
            <person name="Wilkinson J.E."/>
            <person name="Willey D.L."/>
            <person name="Williams H."/>
            <person name="Wilming L."/>
            <person name="Wray P.W."/>
            <person name="Wu Z."/>
            <person name="Coulson A."/>
            <person name="Vaudin M."/>
            <person name="Sulston J.E."/>
            <person name="Durbin R.M."/>
            <person name="Hubbard T."/>
            <person name="Wooster R."/>
            <person name="Dunham I."/>
            <person name="Carter N.P."/>
            <person name="McVean G."/>
            <person name="Ross M.T."/>
            <person name="Harrow J."/>
            <person name="Olson M.V."/>
            <person name="Beck S."/>
            <person name="Rogers J."/>
            <person name="Bentley D.R."/>
        </authorList>
    </citation>
    <scope>NUCLEOTIDE SEQUENCE [LARGE SCALE GENOMIC DNA]</scope>
</reference>
<reference key="5">
    <citation type="submission" date="2005-07" db="EMBL/GenBank/DDBJ databases">
        <authorList>
            <person name="Mural R.J."/>
            <person name="Istrail S."/>
            <person name="Sutton G.G."/>
            <person name="Florea L."/>
            <person name="Halpern A.L."/>
            <person name="Mobarry C.M."/>
            <person name="Lippert R."/>
            <person name="Walenz B."/>
            <person name="Shatkay H."/>
            <person name="Dew I."/>
            <person name="Miller J.R."/>
            <person name="Flanigan M.J."/>
            <person name="Edwards N.J."/>
            <person name="Bolanos R."/>
            <person name="Fasulo D."/>
            <person name="Halldorsson B.V."/>
            <person name="Hannenhalli S."/>
            <person name="Turner R."/>
            <person name="Yooseph S."/>
            <person name="Lu F."/>
            <person name="Nusskern D.R."/>
            <person name="Shue B.C."/>
            <person name="Zheng X.H."/>
            <person name="Zhong F."/>
            <person name="Delcher A.L."/>
            <person name="Huson D.H."/>
            <person name="Kravitz S.A."/>
            <person name="Mouchard L."/>
            <person name="Reinert K."/>
            <person name="Remington K.A."/>
            <person name="Clark A.G."/>
            <person name="Waterman M.S."/>
            <person name="Eichler E.E."/>
            <person name="Adams M.D."/>
            <person name="Hunkapiller M.W."/>
            <person name="Myers E.W."/>
            <person name="Venter J.C."/>
        </authorList>
    </citation>
    <scope>NUCLEOTIDE SEQUENCE [LARGE SCALE GENOMIC DNA]</scope>
</reference>
<reference key="6">
    <citation type="journal article" date="2004" name="Genome Res.">
        <title>The status, quality, and expansion of the NIH full-length cDNA project: the Mammalian Gene Collection (MGC).</title>
        <authorList>
            <consortium name="The MGC Project Team"/>
        </authorList>
    </citation>
    <scope>NUCLEOTIDE SEQUENCE [LARGE SCALE MRNA] (ISOFORM 5)</scope>
    <scope>VARIANT HIS-409</scope>
    <source>
        <tissue>Testis</tissue>
    </source>
</reference>
<reference key="7">
    <citation type="journal article" date="1999" name="J. Biol. Chem.">
        <title>Regulators of G protein signaling 6 and 7. Purification of complexes with gbeta5 and assessment of their effects on g protein-mediated signaling pathways.</title>
        <authorList>
            <person name="Posner B.A."/>
            <person name="Gilman A.G."/>
            <person name="Harris B.A."/>
        </authorList>
    </citation>
    <scope>FUNCTION</scope>
    <scope>INTERACTION WITH GNB5</scope>
    <scope>SUBCELLULAR LOCATION</scope>
</reference>
<reference key="8">
    <citation type="journal article" date="1999" name="Proc. Natl. Acad. Sci. U.S.A.">
        <title>Fidelity of G protein beta-subunit association by the G protein gamma-subunit-like domains of RGS6, RGS7, and RGS11.</title>
        <authorList>
            <person name="Snow B.E."/>
            <person name="Betts L."/>
            <person name="Mangion J."/>
            <person name="Sondek J."/>
            <person name="Siderovski D.P."/>
        </authorList>
    </citation>
    <scope>INTERACTION WITH GNB5</scope>
    <scope>MUTAGENESIS OF TRP-306</scope>
    <source>
        <tissue>Brain</tissue>
    </source>
</reference>
<reference key="9">
    <citation type="journal article" date="2000" name="J. Biol. Chem.">
        <title>14-3-3 interacts with regulator of G protein signaling proteins and modulates their activity.</title>
        <authorList>
            <person name="Benzing T."/>
            <person name="Yaffe M.B."/>
            <person name="Arnould T."/>
            <person name="Sellin L."/>
            <person name="Schermer B."/>
            <person name="Schilling B."/>
            <person name="Schreiber R."/>
            <person name="Kunzelmann K."/>
            <person name="Leparc G.G."/>
            <person name="Kim E."/>
            <person name="Walz G."/>
        </authorList>
    </citation>
    <scope>PHOSPHORYLATION AT SER-434</scope>
    <scope>INTERACTION WITH 14-3-3 PROTEIN YWHAQ</scope>
    <scope>FUNCTION</scope>
</reference>
<reference key="10">
    <citation type="journal article" date="2003" name="Biochem. Biophys. Res. Commun.">
        <title>Snapin interacts with the N-terminus of regulator of G protein signaling 7.</title>
        <authorList>
            <person name="Hunt R.A."/>
            <person name="Edris W."/>
            <person name="Chanda P.K."/>
            <person name="Nieuwenhuijsen B."/>
            <person name="Young K.H."/>
        </authorList>
    </citation>
    <scope>INTERACTION WITH SNAPIN</scope>
</reference>
<reference key="11">
    <citation type="journal article" date="2005" name="J. Cell Biol.">
        <title>Palmitoylation regulates plasma membrane-nuclear shuttling of R7BP, a novel membrane anchor for the RGS7 family.</title>
        <authorList>
            <person name="Drenan R.M."/>
            <person name="Doupnik C.A."/>
            <person name="Boyle M.P."/>
            <person name="Muglia L.J."/>
            <person name="Huettner J.E."/>
            <person name="Linder M.E."/>
            <person name="Blumer K.J."/>
        </authorList>
    </citation>
    <scope>INTERACTION WITH RGS7BP</scope>
    <scope>SUBCELLULAR LOCATION</scope>
    <scope>FUNCTION</scope>
</reference>
<reference key="12">
    <citation type="journal article" date="2019" name="Mol. Pharmacol.">
        <title>Nonclassical ligand-independent regulation of Go protein by an orphan class C G-protein-coupled receptor.</title>
        <authorList>
            <person name="Hajj M."/>
            <person name="De Vita T."/>
            <person name="Vol C."/>
            <person name="Renassia C."/>
            <person name="Bologna J.C."/>
            <person name="Brabet I."/>
            <person name="Cazade M."/>
            <person name="Pastore M."/>
            <person name="Blahos J."/>
            <person name="Labesse G."/>
            <person name="Pin J.P."/>
            <person name="Prezeau L."/>
        </authorList>
    </citation>
    <scope>FUNCTION</scope>
    <scope>INTERACTION WITH GPR158</scope>
</reference>
<reference key="13">
    <citation type="submission" date="2006-12" db="PDB data bank">
        <title>Solution structure of the RGS domain of regulator of G-protein signaling 7.</title>
        <authorList>
            <consortium name="RIKEN structural genomics initiative (RSGI)"/>
        </authorList>
    </citation>
    <scope>STRUCTURE BY NMR OF 323-448</scope>
</reference>
<reference key="14">
    <citation type="journal article" date="2008" name="Proc. Natl. Acad. Sci. U.S.A.">
        <title>Structural diversity in the RGS domain and its interaction with heterotrimeric G protein alpha-subunits.</title>
        <authorList>
            <person name="Soundararajan M."/>
            <person name="Willard F.S."/>
            <person name="Kimple A.J."/>
            <person name="Turnbull A.P."/>
            <person name="Ball L.J."/>
            <person name="Schoch G.A."/>
            <person name="Gileadi C."/>
            <person name="Fedorov O.Y."/>
            <person name="Dowler E.F."/>
            <person name="Higman V.A."/>
            <person name="Hutsell S.Q."/>
            <person name="Sundstroem M."/>
            <person name="Doyle D.A."/>
            <person name="Siderovski D.P."/>
        </authorList>
    </citation>
    <scope>X-RAY CRYSTALLOGRAPHY (2.00 ANGSTROMS) OF 320-463</scope>
    <scope>INTERACTION WITH GNAI1</scope>
</reference>
<reference evidence="23 24" key="15">
    <citation type="journal article" date="2021" name="Nat. Commun.">
        <title>Structure of the class C orphan GPCR GPR158 in complex with RGS7-Gbeta5.</title>
        <authorList>
            <person name="Jeong E."/>
            <person name="Kim Y."/>
            <person name="Jeong J."/>
            <person name="Cho Y."/>
        </authorList>
    </citation>
    <scope>STRUCTURE BY ELECTRON MICROSCOPY (4.30 ANGSTROMS) IN COMPLEX WITH GPR158 AND GNB5</scope>
    <scope>INTERACTION WITH GPR158</scope>
</reference>
<reference evidence="25" key="16">
    <citation type="journal article" date="2022" name="Science">
        <title>Cryo-EM structure of human GPR158 receptor coupled to the RGS7-Gbeta5 signaling complex.</title>
        <authorList>
            <person name="Patil D.N."/>
            <person name="Singh S."/>
            <person name="Laboute T."/>
            <person name="Strutzenberg T.S."/>
            <person name="Qiu X."/>
            <person name="Wu D."/>
            <person name="Novick S.J."/>
            <person name="Robinson C.V."/>
            <person name="Griffin P.R."/>
            <person name="Hunt J.F."/>
            <person name="Izard T."/>
            <person name="Singh A.K."/>
            <person name="Martemyanov K.A."/>
        </authorList>
    </citation>
    <scope>STRUCTURE BY ELECTRON MICROSCOPY (3.40 ANGSTROMS) OF 1-463 IN COMPLEX WITH GPR158 AND GNB5</scope>
    <scope>INTERACTION WITH GPR158</scope>
</reference>
<keyword id="KW-0002">3D-structure</keyword>
<keyword id="KW-0025">Alternative splicing</keyword>
<keyword id="KW-1003">Cell membrane</keyword>
<keyword id="KW-0963">Cytoplasm</keyword>
<keyword id="KW-0343">GTPase activation</keyword>
<keyword id="KW-0449">Lipoprotein</keyword>
<keyword id="KW-0472">Membrane</keyword>
<keyword id="KW-0564">Palmitate</keyword>
<keyword id="KW-0597">Phosphoprotein</keyword>
<keyword id="KW-1267">Proteomics identification</keyword>
<keyword id="KW-1185">Reference proteome</keyword>
<keyword id="KW-0734">Signal transduction inhibitor</keyword>
<keyword id="KW-0832">Ubl conjugation</keyword>
<accession>P49802</accession>
<accession>Q5T3H4</accession>
<accession>Q8TD66</accession>
<accession>Q8TD67</accession>
<accession>Q8WW09</accession>
<accession>Q9UNU7</accession>
<accession>Q9Y6B9</accession>
<gene>
    <name type="primary">RGS7</name>
</gene>
<feature type="chain" id="PRO_0000204196" description="Regulator of G-protein signaling 7">
    <location>
        <begin position="1"/>
        <end position="495"/>
    </location>
</feature>
<feature type="domain" description="DEP" evidence="4">
    <location>
        <begin position="37"/>
        <end position="112"/>
    </location>
</feature>
<feature type="domain" description="G protein gamma">
    <location>
        <begin position="255"/>
        <end position="316"/>
    </location>
</feature>
<feature type="domain" description="RGS" evidence="5">
    <location>
        <begin position="333"/>
        <end position="448"/>
    </location>
</feature>
<feature type="region of interest" description="Disordered" evidence="6">
    <location>
        <begin position="235"/>
        <end position="256"/>
    </location>
</feature>
<feature type="modified residue" description="Phosphoserine" evidence="3">
    <location>
        <position position="229"/>
    </location>
</feature>
<feature type="modified residue" description="Phosphoserine" evidence="2">
    <location>
        <position position="241"/>
    </location>
</feature>
<feature type="modified residue" description="Phosphothreonine" evidence="2">
    <location>
        <position position="243"/>
    </location>
</feature>
<feature type="modified residue" description="Phosphoserine" evidence="10">
    <location>
        <position position="434"/>
    </location>
</feature>
<feature type="splice variant" id="VSP_005671" description="In isoform 4." evidence="20">
    <location>
        <begin position="76"/>
        <end position="128"/>
    </location>
</feature>
<feature type="splice variant" id="VSP_005672" description="In isoform 2." evidence="18 20">
    <original>SGNSMDRRTSFEKFAQNVGRNIPIFPCHKNCTPTLRASTNLL</original>
    <variation>GKSLTSKRLTSLAQSY</variation>
    <location>
        <begin position="454"/>
        <end position="495"/>
    </location>
</feature>
<feature type="splice variant" id="VSP_005673" description="In isoform 3 and isoform 4." evidence="20">
    <location>
        <begin position="454"/>
        <end position="471"/>
    </location>
</feature>
<feature type="splice variant" id="VSP_038388" description="In isoform 5." evidence="19">
    <original>RNIPIFPCHKNCTPTLRASTNLL</original>
    <variation>KSLTSKRLTSLAQSY</variation>
    <location>
        <begin position="473"/>
        <end position="495"/>
    </location>
</feature>
<feature type="sequence variant" id="VAR_057153" description="In dbSNP:rs12746550.">
    <original>M</original>
    <variation>L</variation>
    <location>
        <position position="137"/>
    </location>
</feature>
<feature type="sequence variant" id="VAR_060604" description="In dbSNP:rs17851953." evidence="12">
    <original>Q</original>
    <variation>H</variation>
    <location>
        <position position="409"/>
    </location>
</feature>
<feature type="mutagenesis site" description="Diminishes interaction with GNB5." evidence="8">
    <original>W</original>
    <variation>F</variation>
    <location>
        <position position="306"/>
    </location>
</feature>
<feature type="sequence conflict" description="In Ref. 3; AAM12645." evidence="21" ref="3">
    <original>K</original>
    <variation>R</variation>
    <location>
        <position position="26"/>
    </location>
</feature>
<feature type="sequence conflict" description="In Ref. 3; AAM12644." evidence="21" ref="3">
    <original>Q</original>
    <variation>R</variation>
    <location>
        <position position="234"/>
    </location>
</feature>
<feature type="helix" evidence="27">
    <location>
        <begin position="21"/>
        <end position="34"/>
    </location>
</feature>
<feature type="strand" evidence="27">
    <location>
        <begin position="37"/>
        <end position="40"/>
    </location>
</feature>
<feature type="strand" evidence="27">
    <location>
        <begin position="44"/>
        <end position="47"/>
    </location>
</feature>
<feature type="strand" evidence="27">
    <location>
        <begin position="52"/>
        <end position="58"/>
    </location>
</feature>
<feature type="helix" evidence="27">
    <location>
        <begin position="59"/>
        <end position="69"/>
    </location>
</feature>
<feature type="helix" evidence="27">
    <location>
        <begin position="75"/>
        <end position="87"/>
    </location>
</feature>
<feature type="strand" evidence="27">
    <location>
        <begin position="90"/>
        <end position="93"/>
    </location>
</feature>
<feature type="strand" evidence="27">
    <location>
        <begin position="103"/>
        <end position="105"/>
    </location>
</feature>
<feature type="strand" evidence="27">
    <location>
        <begin position="107"/>
        <end position="110"/>
    </location>
</feature>
<feature type="helix" evidence="27">
    <location>
        <begin position="117"/>
        <end position="119"/>
    </location>
</feature>
<feature type="helix" evidence="27">
    <location>
        <begin position="125"/>
        <end position="137"/>
    </location>
</feature>
<feature type="turn" evidence="27">
    <location>
        <begin position="140"/>
        <end position="142"/>
    </location>
</feature>
<feature type="helix" evidence="27">
    <location>
        <begin position="147"/>
        <end position="159"/>
    </location>
</feature>
<feature type="helix" evidence="27">
    <location>
        <begin position="164"/>
        <end position="179"/>
    </location>
</feature>
<feature type="helix" evidence="27">
    <location>
        <begin position="184"/>
        <end position="191"/>
    </location>
</feature>
<feature type="turn" evidence="27">
    <location>
        <begin position="192"/>
        <end position="196"/>
    </location>
</feature>
<feature type="helix" evidence="27">
    <location>
        <begin position="197"/>
        <end position="200"/>
    </location>
</feature>
<feature type="helix" evidence="27">
    <location>
        <begin position="255"/>
        <end position="270"/>
    </location>
</feature>
<feature type="helix" evidence="27">
    <location>
        <begin position="276"/>
        <end position="289"/>
    </location>
</feature>
<feature type="helix" evidence="27">
    <location>
        <begin position="290"/>
        <end position="293"/>
    </location>
</feature>
<feature type="turn" evidence="27">
    <location>
        <begin position="295"/>
        <end position="297"/>
    </location>
</feature>
<feature type="helix" evidence="27">
    <location>
        <begin position="305"/>
        <end position="308"/>
    </location>
</feature>
<feature type="helix" evidence="27">
    <location>
        <begin position="312"/>
        <end position="318"/>
    </location>
</feature>
<feature type="strand" evidence="27">
    <location>
        <begin position="319"/>
        <end position="321"/>
    </location>
</feature>
<feature type="helix" evidence="26">
    <location>
        <begin position="324"/>
        <end position="329"/>
    </location>
</feature>
<feature type="helix" evidence="26">
    <location>
        <begin position="330"/>
        <end position="332"/>
    </location>
</feature>
<feature type="helix" evidence="26">
    <location>
        <begin position="334"/>
        <end position="339"/>
    </location>
</feature>
<feature type="helix" evidence="26">
    <location>
        <begin position="341"/>
        <end position="353"/>
    </location>
</feature>
<feature type="helix" evidence="26">
    <location>
        <begin position="358"/>
        <end position="369"/>
    </location>
</feature>
<feature type="helix" evidence="26">
    <location>
        <begin position="374"/>
        <end position="376"/>
    </location>
</feature>
<feature type="helix" evidence="26">
    <location>
        <begin position="377"/>
        <end position="388"/>
    </location>
</feature>
<feature type="helix" evidence="26">
    <location>
        <begin position="401"/>
        <end position="412"/>
    </location>
</feature>
<feature type="turn" evidence="26">
    <location>
        <begin position="414"/>
        <end position="419"/>
    </location>
</feature>
<feature type="helix" evidence="26">
    <location>
        <begin position="420"/>
        <end position="432"/>
    </location>
</feature>
<feature type="helix" evidence="26">
    <location>
        <begin position="434"/>
        <end position="440"/>
    </location>
</feature>
<feature type="helix" evidence="26">
    <location>
        <begin position="442"/>
        <end position="449"/>
    </location>
</feature>
<name>RGS7_HUMAN</name>
<comment type="function">
    <text evidence="2 9 10 13 15 22">GTPase activator component of the RGS7-GNB5 complex that regulates G protein-coupled receptor signaling cascades (PubMed:10521509, PubMed:10862767, PubMed:31189666). The RGS7-GNB5 complex acts as an inhibitor signal transduction by promoting the GTPase activity of G protein alpha subunits, such as GNAO1, thereby driving them into their inactive GDP-bound form (PubMed:10521509, PubMed:10862767). May play a role in synaptic vesicle exocytosis (Probable) (PubMed:12659861). Glycine-dependent regulation of the RGS7-GNB5 complex by GPR158 affects mood and cognition via its ability to regulate neuronal excitability in L2/L3 pyramidal neurons of the prefrontal cortex (By similarity). Modulates the activity of potassium channels that are activated by GNAO1 in response to muscarinic acetylcholine receptor M2/CHRM2 signaling (PubMed:15897264).</text>
</comment>
<comment type="subunit">
    <text evidence="2 3 7 8 9 10 11 13 14 15 16 17">Interacts with GNB5, forming the RGS7-GNB5 complex (PubMed:10339615, PubMed:10521509). Interacts with GPR158; promotes the GTPase activator activity of the RGS7-GNB5 complex in absence of glycine, in contrast GTPase activator activity of the RGS7-GNB5 complex is inhibited in presence of glycine (PubMed:31189666, PubMed:34793198, PubMed:34815401). Interacts with GPR179 (By similarity). Interacts with PKD1; this prevents rapid proteasomal degradation (PubMed:10339594). Interacts with RGS7BP, leading to regulate the subcellular location of the heterodimer formed with GNB5 (PubMed:15897264). Interacts (phosphorylated form) with 14-3-3 protein YWHAQ (PubMed:10862767). Interacts with SNAPIN (PubMed:12659861). Interacts with GNAI1 (PubMed:18434541). Interacts with GNAO1, GNAI3 and GNAZ (By similarity).</text>
</comment>
<comment type="subcellular location">
    <subcellularLocation>
        <location evidence="9">Cytoplasm</location>
        <location evidence="9">Cytosol</location>
    </subcellularLocation>
    <subcellularLocation>
        <location evidence="7 13">Cytoplasm</location>
    </subcellularLocation>
    <subcellularLocation>
        <location evidence="7 13">Cell membrane</location>
    </subcellularLocation>
    <subcellularLocation>
        <location evidence="9">Membrane</location>
        <topology evidence="9">Peripheral membrane protein</topology>
        <orientation evidence="21">Cytoplasmic side</orientation>
    </subcellularLocation>
    <text evidence="7 13">Interaction with PKD1 promotes location at the cell membrane (PubMed:10339594). Interaction with RGS7BP promotes location at the cell membrane (PubMed:15897264).</text>
</comment>
<comment type="alternative products">
    <event type="alternative splicing"/>
    <isoform>
        <id>P49802-1</id>
        <name>1</name>
        <name>A</name>
        <sequence type="displayed"/>
    </isoform>
    <isoform>
        <id>P49802-2</id>
        <name>2</name>
        <name>B</name>
        <sequence type="described" ref="VSP_005672"/>
    </isoform>
    <isoform>
        <id>P49802-3</id>
        <name>3</name>
        <sequence type="described" ref="VSP_005673"/>
    </isoform>
    <isoform>
        <id>P49802-4</id>
        <name>4</name>
        <sequence type="described" ref="VSP_005671 VSP_005673"/>
    </isoform>
    <isoform>
        <id>P49802-5</id>
        <name>5</name>
        <sequence type="described" ref="VSP_038388"/>
    </isoform>
</comment>
<comment type="PTM">
    <text evidence="1">Palmitoylated.</text>
</comment>
<comment type="PTM">
    <text evidence="7">Ubiquitinated, leading to rapid proteasomal degradation.</text>
</comment>
<comment type="PTM">
    <text evidence="10">Phosphorylation and subsequent interaction with 14-3-3 proteins inhibits GAP activity.</text>
</comment>
<sequence>MAQGNNYGQTSNGVADESPNMLVYRKMEDVIARMQDEKNGIPIRTVKSFLSKIPSVFSGSDIVQWLIKNLTIEDPVEALHLGTLMAAHGYFFPISDHVLTLKDDGTFYRFQTPYFWPSNCWEPENTDYAVYLCKRTMQNKARLELADYEAESLARLQRAFARKWEFIFMQAEAQAKVDKKRDKIERKILDSQERAFWDVHRPVPGCVNTTEVDIKKSSRMRNPHKTRKSVYGLQNDIRSHSPTHTPTPETKPPTEDELQQQIKYWQIQLDRHRLKMSKVADSLLSYTEQYLEYDPFLLPPDPSNPWLSDDTTFWELEASKEPSQQRVKRWGFGMDEALKDPVGREQFLKFLESEFSSENLRFWLAVEDLKKRPIKEVPSRVQEIWQEFLAPGAPSAINLDSKSYDKTTQNVKEPGRYTFEDAQEHIYKLMKSDSYPRFIRSSAYQELLQAKKKSGNSMDRRTSFEKFAQNVGRNIPIFPCHKNCTPTLRASTNLL</sequence>
<evidence type="ECO:0000250" key="1">
    <source>
        <dbReference type="UniProtKB" id="O46470"/>
    </source>
</evidence>
<evidence type="ECO:0000250" key="2">
    <source>
        <dbReference type="UniProtKB" id="O54829"/>
    </source>
</evidence>
<evidence type="ECO:0000250" key="3">
    <source>
        <dbReference type="UniProtKB" id="P49803"/>
    </source>
</evidence>
<evidence type="ECO:0000255" key="4">
    <source>
        <dbReference type="PROSITE-ProRule" id="PRU00066"/>
    </source>
</evidence>
<evidence type="ECO:0000255" key="5">
    <source>
        <dbReference type="PROSITE-ProRule" id="PRU00171"/>
    </source>
</evidence>
<evidence type="ECO:0000256" key="6">
    <source>
        <dbReference type="SAM" id="MobiDB-lite"/>
    </source>
</evidence>
<evidence type="ECO:0000269" key="7">
    <source>
    </source>
</evidence>
<evidence type="ECO:0000269" key="8">
    <source>
    </source>
</evidence>
<evidence type="ECO:0000269" key="9">
    <source>
    </source>
</evidence>
<evidence type="ECO:0000269" key="10">
    <source>
    </source>
</evidence>
<evidence type="ECO:0000269" key="11">
    <source>
    </source>
</evidence>
<evidence type="ECO:0000269" key="12">
    <source>
    </source>
</evidence>
<evidence type="ECO:0000269" key="13">
    <source>
    </source>
</evidence>
<evidence type="ECO:0000269" key="14">
    <source>
    </source>
</evidence>
<evidence type="ECO:0000269" key="15">
    <source>
    </source>
</evidence>
<evidence type="ECO:0000269" key="16">
    <source>
    </source>
</evidence>
<evidence type="ECO:0000269" key="17">
    <source>
    </source>
</evidence>
<evidence type="ECO:0000303" key="18">
    <source>
    </source>
</evidence>
<evidence type="ECO:0000303" key="19">
    <source>
    </source>
</evidence>
<evidence type="ECO:0000303" key="20">
    <source ref="3"/>
</evidence>
<evidence type="ECO:0000305" key="21"/>
<evidence type="ECO:0000305" key="22">
    <source>
    </source>
</evidence>
<evidence type="ECO:0007744" key="23">
    <source>
        <dbReference type="PDB" id="7EWP"/>
    </source>
</evidence>
<evidence type="ECO:0007744" key="24">
    <source>
        <dbReference type="PDB" id="7EWR"/>
    </source>
</evidence>
<evidence type="ECO:0007744" key="25">
    <source>
        <dbReference type="PDB" id="7SHF"/>
    </source>
</evidence>
<evidence type="ECO:0007829" key="26">
    <source>
        <dbReference type="PDB" id="2A72"/>
    </source>
</evidence>
<evidence type="ECO:0007829" key="27">
    <source>
        <dbReference type="PDB" id="7SHF"/>
    </source>
</evidence>